<dbReference type="EC" id="6.1.1.17" evidence="1"/>
<dbReference type="EMBL" id="CP000025">
    <property type="protein sequence ID" value="AAW35921.1"/>
    <property type="molecule type" value="Genomic_DNA"/>
</dbReference>
<dbReference type="SMR" id="Q5HTB9"/>
<dbReference type="KEGG" id="cjr:CJE1480"/>
<dbReference type="HOGENOM" id="CLU_015768_6_0_7"/>
<dbReference type="GO" id="GO:0005829">
    <property type="term" value="C:cytosol"/>
    <property type="evidence" value="ECO:0007669"/>
    <property type="project" value="TreeGrafter"/>
</dbReference>
<dbReference type="GO" id="GO:0005524">
    <property type="term" value="F:ATP binding"/>
    <property type="evidence" value="ECO:0007669"/>
    <property type="project" value="UniProtKB-UniRule"/>
</dbReference>
<dbReference type="GO" id="GO:0004818">
    <property type="term" value="F:glutamate-tRNA ligase activity"/>
    <property type="evidence" value="ECO:0007669"/>
    <property type="project" value="UniProtKB-UniRule"/>
</dbReference>
<dbReference type="GO" id="GO:0000049">
    <property type="term" value="F:tRNA binding"/>
    <property type="evidence" value="ECO:0007669"/>
    <property type="project" value="InterPro"/>
</dbReference>
<dbReference type="GO" id="GO:0008270">
    <property type="term" value="F:zinc ion binding"/>
    <property type="evidence" value="ECO:0007669"/>
    <property type="project" value="InterPro"/>
</dbReference>
<dbReference type="GO" id="GO:0006424">
    <property type="term" value="P:glutamyl-tRNA aminoacylation"/>
    <property type="evidence" value="ECO:0007669"/>
    <property type="project" value="UniProtKB-UniRule"/>
</dbReference>
<dbReference type="CDD" id="cd00808">
    <property type="entry name" value="GluRS_core"/>
    <property type="match status" value="1"/>
</dbReference>
<dbReference type="FunFam" id="3.40.50.620:FF:000007">
    <property type="entry name" value="Glutamate--tRNA ligase"/>
    <property type="match status" value="1"/>
</dbReference>
<dbReference type="Gene3D" id="1.10.10.350">
    <property type="match status" value="1"/>
</dbReference>
<dbReference type="Gene3D" id="3.40.50.620">
    <property type="entry name" value="HUPs"/>
    <property type="match status" value="1"/>
</dbReference>
<dbReference type="HAMAP" id="MF_00022">
    <property type="entry name" value="Glu_tRNA_synth_type1"/>
    <property type="match status" value="1"/>
</dbReference>
<dbReference type="InterPro" id="IPR045462">
    <property type="entry name" value="aa-tRNA-synth_I_cd-bd"/>
</dbReference>
<dbReference type="InterPro" id="IPR020751">
    <property type="entry name" value="aa-tRNA-synth_I_codon-bd_sub2"/>
</dbReference>
<dbReference type="InterPro" id="IPR001412">
    <property type="entry name" value="aa-tRNA-synth_I_CS"/>
</dbReference>
<dbReference type="InterPro" id="IPR008925">
    <property type="entry name" value="aa_tRNA-synth_I_cd-bd_sf"/>
</dbReference>
<dbReference type="InterPro" id="IPR004527">
    <property type="entry name" value="Glu-tRNA-ligase_bac/mito"/>
</dbReference>
<dbReference type="InterPro" id="IPR000924">
    <property type="entry name" value="Glu/Gln-tRNA-synth"/>
</dbReference>
<dbReference type="InterPro" id="IPR020058">
    <property type="entry name" value="Glu/Gln-tRNA-synth_Ib_cat-dom"/>
</dbReference>
<dbReference type="InterPro" id="IPR049940">
    <property type="entry name" value="GluQ/Sye"/>
</dbReference>
<dbReference type="InterPro" id="IPR033910">
    <property type="entry name" value="GluRS_core"/>
</dbReference>
<dbReference type="InterPro" id="IPR014729">
    <property type="entry name" value="Rossmann-like_a/b/a_fold"/>
</dbReference>
<dbReference type="NCBIfam" id="TIGR00464">
    <property type="entry name" value="gltX_bact"/>
    <property type="match status" value="1"/>
</dbReference>
<dbReference type="PANTHER" id="PTHR43311">
    <property type="entry name" value="GLUTAMATE--TRNA LIGASE"/>
    <property type="match status" value="1"/>
</dbReference>
<dbReference type="PANTHER" id="PTHR43311:SF2">
    <property type="entry name" value="GLUTAMATE--TRNA LIGASE, MITOCHONDRIAL-RELATED"/>
    <property type="match status" value="1"/>
</dbReference>
<dbReference type="Pfam" id="PF19269">
    <property type="entry name" value="Anticodon_2"/>
    <property type="match status" value="1"/>
</dbReference>
<dbReference type="Pfam" id="PF00749">
    <property type="entry name" value="tRNA-synt_1c"/>
    <property type="match status" value="1"/>
</dbReference>
<dbReference type="PRINTS" id="PR00987">
    <property type="entry name" value="TRNASYNTHGLU"/>
</dbReference>
<dbReference type="SUPFAM" id="SSF48163">
    <property type="entry name" value="An anticodon-binding domain of class I aminoacyl-tRNA synthetases"/>
    <property type="match status" value="1"/>
</dbReference>
<dbReference type="SUPFAM" id="SSF52374">
    <property type="entry name" value="Nucleotidylyl transferase"/>
    <property type="match status" value="1"/>
</dbReference>
<dbReference type="PROSITE" id="PS00178">
    <property type="entry name" value="AA_TRNA_LIGASE_I"/>
    <property type="match status" value="1"/>
</dbReference>
<name>SYE2_CAMJR</name>
<sequence>MHEKLTTRFAPSPTGYLHIGGLRTALYNYLYARKNGGNFLLRIEDTDLKRNSKEATKAIIEAFKWCGLEHDGEVTYQSERFDLYKEYVKKLLDEGKAYYCYMSKEELEELRAKQEAAKERPRYDGRYREFTGTPPQGIEPVVRIKAPQSGEIVFKDGVKGEVRFKAEDIMDDFIIARSDGTPTYNFTVVIDDALMGVSDVIRGDDHLSNTPKQIVLYEALGFKIPKFFHVAMIHGEDGKKLSKRHGATDVMEYKEMGILPQALLNFLVRLGWSHGDDEVFSLEDLKKLFDPYHINKSASCYNAKKLEWLNAHYIKTLPFEEINRQLKDLGFDLSVYEKAGFLLDLLRERAKTLHDIINGAKSIVNAPQNYDENAVQKFINKNNLELLQAFANTLKDQKTGKDFEDFTNDFLEKKEAKLKDLAQPIRIALTGSAVSPSIFEVLEFLEVDECKKRIENFLKVRGK</sequence>
<feature type="chain" id="PRO_0000119534" description="Glutamate--tRNA ligase 2">
    <location>
        <begin position="1"/>
        <end position="463"/>
    </location>
</feature>
<feature type="short sequence motif" description="'HIGH' region" evidence="1">
    <location>
        <begin position="11"/>
        <end position="21"/>
    </location>
</feature>
<feature type="short sequence motif" description="'KMSKS' region" evidence="1">
    <location>
        <begin position="240"/>
        <end position="244"/>
    </location>
</feature>
<feature type="binding site" evidence="1">
    <location>
        <position position="243"/>
    </location>
    <ligand>
        <name>ATP</name>
        <dbReference type="ChEBI" id="CHEBI:30616"/>
    </ligand>
</feature>
<protein>
    <recommendedName>
        <fullName evidence="1">Glutamate--tRNA ligase 2</fullName>
        <ecNumber evidence="1">6.1.1.17</ecNumber>
    </recommendedName>
    <alternativeName>
        <fullName evidence="1">Glutamyl-tRNA synthetase 2</fullName>
        <shortName evidence="1">GluRS 2</shortName>
    </alternativeName>
</protein>
<organism>
    <name type="scientific">Campylobacter jejuni (strain RM1221)</name>
    <dbReference type="NCBI Taxonomy" id="195099"/>
    <lineage>
        <taxon>Bacteria</taxon>
        <taxon>Pseudomonadati</taxon>
        <taxon>Campylobacterota</taxon>
        <taxon>Epsilonproteobacteria</taxon>
        <taxon>Campylobacterales</taxon>
        <taxon>Campylobacteraceae</taxon>
        <taxon>Campylobacter</taxon>
    </lineage>
</organism>
<evidence type="ECO:0000255" key="1">
    <source>
        <dbReference type="HAMAP-Rule" id="MF_00022"/>
    </source>
</evidence>
<accession>Q5HTB9</accession>
<proteinExistence type="inferred from homology"/>
<keyword id="KW-0030">Aminoacyl-tRNA synthetase</keyword>
<keyword id="KW-0067">ATP-binding</keyword>
<keyword id="KW-0963">Cytoplasm</keyword>
<keyword id="KW-0436">Ligase</keyword>
<keyword id="KW-0547">Nucleotide-binding</keyword>
<keyword id="KW-0648">Protein biosynthesis</keyword>
<reference key="1">
    <citation type="journal article" date="2005" name="PLoS Biol.">
        <title>Major structural differences and novel potential virulence mechanisms from the genomes of multiple Campylobacter species.</title>
        <authorList>
            <person name="Fouts D.E."/>
            <person name="Mongodin E.F."/>
            <person name="Mandrell R.E."/>
            <person name="Miller W.G."/>
            <person name="Rasko D.A."/>
            <person name="Ravel J."/>
            <person name="Brinkac L.M."/>
            <person name="DeBoy R.T."/>
            <person name="Parker C.T."/>
            <person name="Daugherty S.C."/>
            <person name="Dodson R.J."/>
            <person name="Durkin A.S."/>
            <person name="Madupu R."/>
            <person name="Sullivan S.A."/>
            <person name="Shetty J.U."/>
            <person name="Ayodeji M.A."/>
            <person name="Shvartsbeyn A."/>
            <person name="Schatz M.C."/>
            <person name="Badger J.H."/>
            <person name="Fraser C.M."/>
            <person name="Nelson K.E."/>
        </authorList>
    </citation>
    <scope>NUCLEOTIDE SEQUENCE [LARGE SCALE GENOMIC DNA]</scope>
    <source>
        <strain>RM1221</strain>
    </source>
</reference>
<comment type="function">
    <text evidence="1">Catalyzes the attachment of glutamate to tRNA(Glu) in a two-step reaction: glutamate is first activated by ATP to form Glu-AMP and then transferred to the acceptor end of tRNA(Glu).</text>
</comment>
<comment type="catalytic activity">
    <reaction evidence="1">
        <text>tRNA(Glu) + L-glutamate + ATP = L-glutamyl-tRNA(Glu) + AMP + diphosphate</text>
        <dbReference type="Rhea" id="RHEA:23540"/>
        <dbReference type="Rhea" id="RHEA-COMP:9663"/>
        <dbReference type="Rhea" id="RHEA-COMP:9680"/>
        <dbReference type="ChEBI" id="CHEBI:29985"/>
        <dbReference type="ChEBI" id="CHEBI:30616"/>
        <dbReference type="ChEBI" id="CHEBI:33019"/>
        <dbReference type="ChEBI" id="CHEBI:78442"/>
        <dbReference type="ChEBI" id="CHEBI:78520"/>
        <dbReference type="ChEBI" id="CHEBI:456215"/>
        <dbReference type="EC" id="6.1.1.17"/>
    </reaction>
</comment>
<comment type="subunit">
    <text evidence="1">Monomer.</text>
</comment>
<comment type="subcellular location">
    <subcellularLocation>
        <location evidence="1">Cytoplasm</location>
    </subcellularLocation>
</comment>
<comment type="similarity">
    <text evidence="1">Belongs to the class-I aminoacyl-tRNA synthetase family. Glutamate--tRNA ligase type 1 subfamily.</text>
</comment>
<gene>
    <name evidence="1" type="primary">gltX2</name>
    <name type="synonym">gltX-2</name>
    <name type="ordered locus">CJE1480</name>
</gene>